<evidence type="ECO:0000255" key="1">
    <source>
        <dbReference type="HAMAP-Rule" id="MF_00503"/>
    </source>
</evidence>
<evidence type="ECO:0000305" key="2"/>
<proteinExistence type="inferred from homology"/>
<gene>
    <name evidence="1" type="primary">rplI</name>
    <name type="ordered locus">XF_2559</name>
</gene>
<comment type="function">
    <text evidence="1">Binds to the 23S rRNA.</text>
</comment>
<comment type="similarity">
    <text evidence="1">Belongs to the bacterial ribosomal protein bL9 family.</text>
</comment>
<name>RL9_XYLFA</name>
<accession>Q9PAF9</accession>
<reference key="1">
    <citation type="journal article" date="2000" name="Nature">
        <title>The genome sequence of the plant pathogen Xylella fastidiosa.</title>
        <authorList>
            <person name="Simpson A.J.G."/>
            <person name="Reinach F.C."/>
            <person name="Arruda P."/>
            <person name="Abreu F.A."/>
            <person name="Acencio M."/>
            <person name="Alvarenga R."/>
            <person name="Alves L.M.C."/>
            <person name="Araya J.E."/>
            <person name="Baia G.S."/>
            <person name="Baptista C.S."/>
            <person name="Barros M.H."/>
            <person name="Bonaccorsi E.D."/>
            <person name="Bordin S."/>
            <person name="Bove J.M."/>
            <person name="Briones M.R.S."/>
            <person name="Bueno M.R.P."/>
            <person name="Camargo A.A."/>
            <person name="Camargo L.E.A."/>
            <person name="Carraro D.M."/>
            <person name="Carrer H."/>
            <person name="Colauto N.B."/>
            <person name="Colombo C."/>
            <person name="Costa F.F."/>
            <person name="Costa M.C.R."/>
            <person name="Costa-Neto C.M."/>
            <person name="Coutinho L.L."/>
            <person name="Cristofani M."/>
            <person name="Dias-Neto E."/>
            <person name="Docena C."/>
            <person name="El-Dorry H."/>
            <person name="Facincani A.P."/>
            <person name="Ferreira A.J.S."/>
            <person name="Ferreira V.C.A."/>
            <person name="Ferro J.A."/>
            <person name="Fraga J.S."/>
            <person name="Franca S.C."/>
            <person name="Franco M.C."/>
            <person name="Frohme M."/>
            <person name="Furlan L.R."/>
            <person name="Garnier M."/>
            <person name="Goldman G.H."/>
            <person name="Goldman M.H.S."/>
            <person name="Gomes S.L."/>
            <person name="Gruber A."/>
            <person name="Ho P.L."/>
            <person name="Hoheisel J.D."/>
            <person name="Junqueira M.L."/>
            <person name="Kemper E.L."/>
            <person name="Kitajima J.P."/>
            <person name="Krieger J.E."/>
            <person name="Kuramae E.E."/>
            <person name="Laigret F."/>
            <person name="Lambais M.R."/>
            <person name="Leite L.C.C."/>
            <person name="Lemos E.G.M."/>
            <person name="Lemos M.V.F."/>
            <person name="Lopes S.A."/>
            <person name="Lopes C.R."/>
            <person name="Machado J.A."/>
            <person name="Machado M.A."/>
            <person name="Madeira A.M.B.N."/>
            <person name="Madeira H.M.F."/>
            <person name="Marino C.L."/>
            <person name="Marques M.V."/>
            <person name="Martins E.A.L."/>
            <person name="Martins E.M.F."/>
            <person name="Matsukuma A.Y."/>
            <person name="Menck C.F.M."/>
            <person name="Miracca E.C."/>
            <person name="Miyaki C.Y."/>
            <person name="Monteiro-Vitorello C.B."/>
            <person name="Moon D.H."/>
            <person name="Nagai M.A."/>
            <person name="Nascimento A.L.T.O."/>
            <person name="Netto L.E.S."/>
            <person name="Nhani A. Jr."/>
            <person name="Nobrega F.G."/>
            <person name="Nunes L.R."/>
            <person name="Oliveira M.A."/>
            <person name="de Oliveira M.C."/>
            <person name="de Oliveira R.C."/>
            <person name="Palmieri D.A."/>
            <person name="Paris A."/>
            <person name="Peixoto B.R."/>
            <person name="Pereira G.A.G."/>
            <person name="Pereira H.A. Jr."/>
            <person name="Pesquero J.B."/>
            <person name="Quaggio R.B."/>
            <person name="Roberto P.G."/>
            <person name="Rodrigues V."/>
            <person name="de Rosa A.J.M."/>
            <person name="de Rosa V.E. Jr."/>
            <person name="de Sa R.G."/>
            <person name="Santelli R.V."/>
            <person name="Sawasaki H.E."/>
            <person name="da Silva A.C.R."/>
            <person name="da Silva A.M."/>
            <person name="da Silva F.R."/>
            <person name="Silva W.A. Jr."/>
            <person name="da Silveira J.F."/>
            <person name="Silvestri M.L.Z."/>
            <person name="Siqueira W.J."/>
            <person name="de Souza A.A."/>
            <person name="de Souza A.P."/>
            <person name="Terenzi M.F."/>
            <person name="Truffi D."/>
            <person name="Tsai S.M."/>
            <person name="Tsuhako M.H."/>
            <person name="Vallada H."/>
            <person name="Van Sluys M.A."/>
            <person name="Verjovski-Almeida S."/>
            <person name="Vettore A.L."/>
            <person name="Zago M.A."/>
            <person name="Zatz M."/>
            <person name="Meidanis J."/>
            <person name="Setubal J.C."/>
        </authorList>
    </citation>
    <scope>NUCLEOTIDE SEQUENCE [LARGE SCALE GENOMIC DNA]</scope>
    <source>
        <strain>9a5c</strain>
    </source>
</reference>
<sequence>MELILLQKVANLGALGDKVTVKPGYGRNFLLPKGVAVPATEANLAAFQAKRAEYEAKAKSELDQAQARAAKFEGASVTVSAHASTEGKLYGSVGARDIAEAFTAVGLPLEKKEVILGEGPFRLIGEYDVLLHLHADVESTVKVIVQGVP</sequence>
<keyword id="KW-0687">Ribonucleoprotein</keyword>
<keyword id="KW-0689">Ribosomal protein</keyword>
<keyword id="KW-0694">RNA-binding</keyword>
<keyword id="KW-0699">rRNA-binding</keyword>
<organism>
    <name type="scientific">Xylella fastidiosa (strain 9a5c)</name>
    <dbReference type="NCBI Taxonomy" id="160492"/>
    <lineage>
        <taxon>Bacteria</taxon>
        <taxon>Pseudomonadati</taxon>
        <taxon>Pseudomonadota</taxon>
        <taxon>Gammaproteobacteria</taxon>
        <taxon>Lysobacterales</taxon>
        <taxon>Lysobacteraceae</taxon>
        <taxon>Xylella</taxon>
    </lineage>
</organism>
<feature type="chain" id="PRO_0000176708" description="Large ribosomal subunit protein bL9">
    <location>
        <begin position="1"/>
        <end position="149"/>
    </location>
</feature>
<dbReference type="EMBL" id="AE003849">
    <property type="protein sequence ID" value="AAF85356.1"/>
    <property type="molecule type" value="Genomic_DNA"/>
</dbReference>
<dbReference type="PIR" id="B82543">
    <property type="entry name" value="B82543"/>
</dbReference>
<dbReference type="RefSeq" id="WP_010894980.1">
    <property type="nucleotide sequence ID" value="NC_002488.3"/>
</dbReference>
<dbReference type="SMR" id="Q9PAF9"/>
<dbReference type="STRING" id="160492.XF_2559"/>
<dbReference type="KEGG" id="xfa:XF_2559"/>
<dbReference type="eggNOG" id="COG0359">
    <property type="taxonomic scope" value="Bacteria"/>
</dbReference>
<dbReference type="HOGENOM" id="CLU_078938_4_1_6"/>
<dbReference type="Proteomes" id="UP000000812">
    <property type="component" value="Chromosome"/>
</dbReference>
<dbReference type="GO" id="GO:1990904">
    <property type="term" value="C:ribonucleoprotein complex"/>
    <property type="evidence" value="ECO:0007669"/>
    <property type="project" value="UniProtKB-KW"/>
</dbReference>
<dbReference type="GO" id="GO:0005840">
    <property type="term" value="C:ribosome"/>
    <property type="evidence" value="ECO:0007669"/>
    <property type="project" value="UniProtKB-KW"/>
</dbReference>
<dbReference type="GO" id="GO:0019843">
    <property type="term" value="F:rRNA binding"/>
    <property type="evidence" value="ECO:0007669"/>
    <property type="project" value="UniProtKB-UniRule"/>
</dbReference>
<dbReference type="GO" id="GO:0003735">
    <property type="term" value="F:structural constituent of ribosome"/>
    <property type="evidence" value="ECO:0007669"/>
    <property type="project" value="InterPro"/>
</dbReference>
<dbReference type="GO" id="GO:0006412">
    <property type="term" value="P:translation"/>
    <property type="evidence" value="ECO:0007669"/>
    <property type="project" value="UniProtKB-UniRule"/>
</dbReference>
<dbReference type="Gene3D" id="3.10.430.100">
    <property type="entry name" value="Ribosomal protein L9, C-terminal domain"/>
    <property type="match status" value="1"/>
</dbReference>
<dbReference type="Gene3D" id="3.40.5.10">
    <property type="entry name" value="Ribosomal protein L9, N-terminal domain"/>
    <property type="match status" value="1"/>
</dbReference>
<dbReference type="HAMAP" id="MF_00503">
    <property type="entry name" value="Ribosomal_bL9"/>
    <property type="match status" value="1"/>
</dbReference>
<dbReference type="InterPro" id="IPR000244">
    <property type="entry name" value="Ribosomal_bL9"/>
</dbReference>
<dbReference type="InterPro" id="IPR009027">
    <property type="entry name" value="Ribosomal_bL9/RNase_H1_N"/>
</dbReference>
<dbReference type="InterPro" id="IPR020594">
    <property type="entry name" value="Ribosomal_bL9_bac/chp"/>
</dbReference>
<dbReference type="InterPro" id="IPR020069">
    <property type="entry name" value="Ribosomal_bL9_C"/>
</dbReference>
<dbReference type="InterPro" id="IPR036791">
    <property type="entry name" value="Ribosomal_bL9_C_sf"/>
</dbReference>
<dbReference type="InterPro" id="IPR020070">
    <property type="entry name" value="Ribosomal_bL9_N"/>
</dbReference>
<dbReference type="InterPro" id="IPR036935">
    <property type="entry name" value="Ribosomal_bL9_N_sf"/>
</dbReference>
<dbReference type="NCBIfam" id="TIGR00158">
    <property type="entry name" value="L9"/>
    <property type="match status" value="1"/>
</dbReference>
<dbReference type="PANTHER" id="PTHR21368">
    <property type="entry name" value="50S RIBOSOMAL PROTEIN L9"/>
    <property type="match status" value="1"/>
</dbReference>
<dbReference type="Pfam" id="PF03948">
    <property type="entry name" value="Ribosomal_L9_C"/>
    <property type="match status" value="1"/>
</dbReference>
<dbReference type="Pfam" id="PF01281">
    <property type="entry name" value="Ribosomal_L9_N"/>
    <property type="match status" value="1"/>
</dbReference>
<dbReference type="SUPFAM" id="SSF55658">
    <property type="entry name" value="L9 N-domain-like"/>
    <property type="match status" value="1"/>
</dbReference>
<dbReference type="SUPFAM" id="SSF55653">
    <property type="entry name" value="Ribosomal protein L9 C-domain"/>
    <property type="match status" value="1"/>
</dbReference>
<dbReference type="PROSITE" id="PS00651">
    <property type="entry name" value="RIBOSOMAL_L9"/>
    <property type="match status" value="1"/>
</dbReference>
<protein>
    <recommendedName>
        <fullName evidence="1">Large ribosomal subunit protein bL9</fullName>
    </recommendedName>
    <alternativeName>
        <fullName evidence="2">50S ribosomal protein L9</fullName>
    </alternativeName>
</protein>